<protein>
    <recommendedName>
        <fullName evidence="1">Succinate--CoA ligase [ADP-forming] subunit beta</fullName>
        <ecNumber evidence="1">6.2.1.5</ecNumber>
    </recommendedName>
    <alternativeName>
        <fullName evidence="1">Succinyl-CoA synthetase subunit beta</fullName>
        <shortName evidence="1">SCS-beta</shortName>
    </alternativeName>
</protein>
<sequence>MNLHEYQAKQLFASYGLPVPRGEVAYNVEDALLVASQLSTSRWVVKAQVHAGGRGKAGGVKLVSSKDELAAVAKSMLGTRLVTYQTDARGQPVNAILVEETCEIDKELYLGAVVDRSTRRVVIMASTEGGVEIEKVAHETPEKIFKVVVDPLVGVMPFQCRETAFKLGLKDDQIKQFTHLMMGLGKMFVDCDLSLLEINPLVITKSGQLICLDGKINIDGNALFRQPKLKNMRDVSQEDDRENRASDWELNYIPLDGTIGCMVNGAGLAMATMDVIKLHGGEPANFLDVGGGATKERVSEALKIIVSDEKVKGILVNIFGGIVRCDLIADGILAAVKEVDVKIPVVVRLEGNNAQLGAEILNKSNLNVIAATSLTDAAKKIVAAVSE</sequence>
<name>SUCC_LEGPL</name>
<comment type="function">
    <text evidence="1">Succinyl-CoA synthetase functions in the citric acid cycle (TCA), coupling the hydrolysis of succinyl-CoA to the synthesis of either ATP or GTP and thus represents the only step of substrate-level phosphorylation in the TCA. The beta subunit provides nucleotide specificity of the enzyme and binds the substrate succinate, while the binding sites for coenzyme A and phosphate are found in the alpha subunit.</text>
</comment>
<comment type="catalytic activity">
    <reaction evidence="1">
        <text>succinate + ATP + CoA = succinyl-CoA + ADP + phosphate</text>
        <dbReference type="Rhea" id="RHEA:17661"/>
        <dbReference type="ChEBI" id="CHEBI:30031"/>
        <dbReference type="ChEBI" id="CHEBI:30616"/>
        <dbReference type="ChEBI" id="CHEBI:43474"/>
        <dbReference type="ChEBI" id="CHEBI:57287"/>
        <dbReference type="ChEBI" id="CHEBI:57292"/>
        <dbReference type="ChEBI" id="CHEBI:456216"/>
        <dbReference type="EC" id="6.2.1.5"/>
    </reaction>
    <physiologicalReaction direction="right-to-left" evidence="1">
        <dbReference type="Rhea" id="RHEA:17663"/>
    </physiologicalReaction>
</comment>
<comment type="catalytic activity">
    <reaction evidence="1">
        <text>GTP + succinate + CoA = succinyl-CoA + GDP + phosphate</text>
        <dbReference type="Rhea" id="RHEA:22120"/>
        <dbReference type="ChEBI" id="CHEBI:30031"/>
        <dbReference type="ChEBI" id="CHEBI:37565"/>
        <dbReference type="ChEBI" id="CHEBI:43474"/>
        <dbReference type="ChEBI" id="CHEBI:57287"/>
        <dbReference type="ChEBI" id="CHEBI:57292"/>
        <dbReference type="ChEBI" id="CHEBI:58189"/>
    </reaction>
    <physiologicalReaction direction="right-to-left" evidence="1">
        <dbReference type="Rhea" id="RHEA:22122"/>
    </physiologicalReaction>
</comment>
<comment type="cofactor">
    <cofactor evidence="1">
        <name>Mg(2+)</name>
        <dbReference type="ChEBI" id="CHEBI:18420"/>
    </cofactor>
    <text evidence="1">Binds 1 Mg(2+) ion per subunit.</text>
</comment>
<comment type="pathway">
    <text evidence="1">Carbohydrate metabolism; tricarboxylic acid cycle; succinate from succinyl-CoA (ligase route): step 1/1.</text>
</comment>
<comment type="subunit">
    <text evidence="1">Heterotetramer of two alpha and two beta subunits.</text>
</comment>
<comment type="similarity">
    <text evidence="1">Belongs to the succinate/malate CoA ligase beta subunit family.</text>
</comment>
<gene>
    <name evidence="1" type="primary">sucC</name>
    <name type="ordered locus">lpl0580</name>
</gene>
<evidence type="ECO:0000255" key="1">
    <source>
        <dbReference type="HAMAP-Rule" id="MF_00558"/>
    </source>
</evidence>
<reference key="1">
    <citation type="journal article" date="2004" name="Nat. Genet.">
        <title>Evidence in the Legionella pneumophila genome for exploitation of host cell functions and high genome plasticity.</title>
        <authorList>
            <person name="Cazalet C."/>
            <person name="Rusniok C."/>
            <person name="Brueggemann H."/>
            <person name="Zidane N."/>
            <person name="Magnier A."/>
            <person name="Ma L."/>
            <person name="Tichit M."/>
            <person name="Jarraud S."/>
            <person name="Bouchier C."/>
            <person name="Vandenesch F."/>
            <person name="Kunst F."/>
            <person name="Etienne J."/>
            <person name="Glaser P."/>
            <person name="Buchrieser C."/>
        </authorList>
    </citation>
    <scope>NUCLEOTIDE SEQUENCE [LARGE SCALE GENOMIC DNA]</scope>
    <source>
        <strain>Lens</strain>
    </source>
</reference>
<keyword id="KW-0067">ATP-binding</keyword>
<keyword id="KW-0436">Ligase</keyword>
<keyword id="KW-0460">Magnesium</keyword>
<keyword id="KW-0479">Metal-binding</keyword>
<keyword id="KW-0547">Nucleotide-binding</keyword>
<keyword id="KW-0816">Tricarboxylic acid cycle</keyword>
<proteinExistence type="inferred from homology"/>
<accession>Q5WZ04</accession>
<feature type="chain" id="PRO_1000082114" description="Succinate--CoA ligase [ADP-forming] subunit beta">
    <location>
        <begin position="1"/>
        <end position="387"/>
    </location>
</feature>
<feature type="domain" description="ATP-grasp" evidence="1">
    <location>
        <begin position="9"/>
        <end position="244"/>
    </location>
</feature>
<feature type="binding site" evidence="1">
    <location>
        <position position="46"/>
    </location>
    <ligand>
        <name>ATP</name>
        <dbReference type="ChEBI" id="CHEBI:30616"/>
    </ligand>
</feature>
<feature type="binding site" evidence="1">
    <location>
        <begin position="53"/>
        <end position="55"/>
    </location>
    <ligand>
        <name>ATP</name>
        <dbReference type="ChEBI" id="CHEBI:30616"/>
    </ligand>
</feature>
<feature type="binding site" evidence="1">
    <location>
        <position position="99"/>
    </location>
    <ligand>
        <name>ATP</name>
        <dbReference type="ChEBI" id="CHEBI:30616"/>
    </ligand>
</feature>
<feature type="binding site" evidence="1">
    <location>
        <position position="102"/>
    </location>
    <ligand>
        <name>ATP</name>
        <dbReference type="ChEBI" id="CHEBI:30616"/>
    </ligand>
</feature>
<feature type="binding site" evidence="1">
    <location>
        <position position="107"/>
    </location>
    <ligand>
        <name>ATP</name>
        <dbReference type="ChEBI" id="CHEBI:30616"/>
    </ligand>
</feature>
<feature type="binding site" evidence="1">
    <location>
        <position position="199"/>
    </location>
    <ligand>
        <name>Mg(2+)</name>
        <dbReference type="ChEBI" id="CHEBI:18420"/>
    </ligand>
</feature>
<feature type="binding site" evidence="1">
    <location>
        <position position="213"/>
    </location>
    <ligand>
        <name>Mg(2+)</name>
        <dbReference type="ChEBI" id="CHEBI:18420"/>
    </ligand>
</feature>
<feature type="binding site" evidence="1">
    <location>
        <position position="264"/>
    </location>
    <ligand>
        <name>substrate</name>
        <note>ligand shared with subunit alpha</note>
    </ligand>
</feature>
<feature type="binding site" evidence="1">
    <location>
        <begin position="321"/>
        <end position="323"/>
    </location>
    <ligand>
        <name>substrate</name>
        <note>ligand shared with subunit alpha</note>
    </ligand>
</feature>
<dbReference type="EC" id="6.2.1.5" evidence="1"/>
<dbReference type="EMBL" id="CR628337">
    <property type="protein sequence ID" value="CAH14811.1"/>
    <property type="molecule type" value="Genomic_DNA"/>
</dbReference>
<dbReference type="RefSeq" id="WP_011214776.1">
    <property type="nucleotide sequence ID" value="NC_006369.1"/>
</dbReference>
<dbReference type="SMR" id="Q5WZ04"/>
<dbReference type="KEGG" id="lpf:lpl0580"/>
<dbReference type="LegioList" id="lpl0580"/>
<dbReference type="HOGENOM" id="CLU_037430_0_2_6"/>
<dbReference type="UniPathway" id="UPA00223">
    <property type="reaction ID" value="UER00999"/>
</dbReference>
<dbReference type="Proteomes" id="UP000002517">
    <property type="component" value="Chromosome"/>
</dbReference>
<dbReference type="GO" id="GO:0005829">
    <property type="term" value="C:cytosol"/>
    <property type="evidence" value="ECO:0007669"/>
    <property type="project" value="TreeGrafter"/>
</dbReference>
<dbReference type="GO" id="GO:0042709">
    <property type="term" value="C:succinate-CoA ligase complex"/>
    <property type="evidence" value="ECO:0007669"/>
    <property type="project" value="TreeGrafter"/>
</dbReference>
<dbReference type="GO" id="GO:0005524">
    <property type="term" value="F:ATP binding"/>
    <property type="evidence" value="ECO:0007669"/>
    <property type="project" value="UniProtKB-UniRule"/>
</dbReference>
<dbReference type="GO" id="GO:0000287">
    <property type="term" value="F:magnesium ion binding"/>
    <property type="evidence" value="ECO:0007669"/>
    <property type="project" value="UniProtKB-UniRule"/>
</dbReference>
<dbReference type="GO" id="GO:0004775">
    <property type="term" value="F:succinate-CoA ligase (ADP-forming) activity"/>
    <property type="evidence" value="ECO:0007669"/>
    <property type="project" value="UniProtKB-UniRule"/>
</dbReference>
<dbReference type="GO" id="GO:0004776">
    <property type="term" value="F:succinate-CoA ligase (GDP-forming) activity"/>
    <property type="evidence" value="ECO:0007669"/>
    <property type="project" value="RHEA"/>
</dbReference>
<dbReference type="GO" id="GO:0006104">
    <property type="term" value="P:succinyl-CoA metabolic process"/>
    <property type="evidence" value="ECO:0007669"/>
    <property type="project" value="TreeGrafter"/>
</dbReference>
<dbReference type="GO" id="GO:0006099">
    <property type="term" value="P:tricarboxylic acid cycle"/>
    <property type="evidence" value="ECO:0007669"/>
    <property type="project" value="UniProtKB-UniRule"/>
</dbReference>
<dbReference type="FunFam" id="3.30.1490.20:FF:000002">
    <property type="entry name" value="Succinate--CoA ligase [ADP-forming] subunit beta"/>
    <property type="match status" value="1"/>
</dbReference>
<dbReference type="FunFam" id="3.30.470.20:FF:000002">
    <property type="entry name" value="Succinate--CoA ligase [ADP-forming] subunit beta"/>
    <property type="match status" value="1"/>
</dbReference>
<dbReference type="FunFam" id="3.40.50.261:FF:000001">
    <property type="entry name" value="Succinate--CoA ligase [ADP-forming] subunit beta"/>
    <property type="match status" value="1"/>
</dbReference>
<dbReference type="Gene3D" id="3.30.1490.20">
    <property type="entry name" value="ATP-grasp fold, A domain"/>
    <property type="match status" value="1"/>
</dbReference>
<dbReference type="Gene3D" id="3.30.470.20">
    <property type="entry name" value="ATP-grasp fold, B domain"/>
    <property type="match status" value="1"/>
</dbReference>
<dbReference type="Gene3D" id="3.40.50.261">
    <property type="entry name" value="Succinyl-CoA synthetase domains"/>
    <property type="match status" value="1"/>
</dbReference>
<dbReference type="HAMAP" id="MF_00558">
    <property type="entry name" value="Succ_CoA_beta"/>
    <property type="match status" value="1"/>
</dbReference>
<dbReference type="InterPro" id="IPR011761">
    <property type="entry name" value="ATP-grasp"/>
</dbReference>
<dbReference type="InterPro" id="IPR013650">
    <property type="entry name" value="ATP-grasp_succ-CoA_synth-type"/>
</dbReference>
<dbReference type="InterPro" id="IPR013815">
    <property type="entry name" value="ATP_grasp_subdomain_1"/>
</dbReference>
<dbReference type="InterPro" id="IPR017866">
    <property type="entry name" value="Succ-CoA_synthase_bsu_CS"/>
</dbReference>
<dbReference type="InterPro" id="IPR005811">
    <property type="entry name" value="SUCC_ACL_C"/>
</dbReference>
<dbReference type="InterPro" id="IPR005809">
    <property type="entry name" value="Succ_CoA_ligase-like_bsu"/>
</dbReference>
<dbReference type="InterPro" id="IPR016102">
    <property type="entry name" value="Succinyl-CoA_synth-like"/>
</dbReference>
<dbReference type="NCBIfam" id="NF001913">
    <property type="entry name" value="PRK00696.1"/>
    <property type="match status" value="1"/>
</dbReference>
<dbReference type="NCBIfam" id="TIGR01016">
    <property type="entry name" value="sucCoAbeta"/>
    <property type="match status" value="1"/>
</dbReference>
<dbReference type="PANTHER" id="PTHR11815:SF10">
    <property type="entry name" value="SUCCINATE--COA LIGASE [GDP-FORMING] SUBUNIT BETA, MITOCHONDRIAL"/>
    <property type="match status" value="1"/>
</dbReference>
<dbReference type="PANTHER" id="PTHR11815">
    <property type="entry name" value="SUCCINYL-COA SYNTHETASE BETA CHAIN"/>
    <property type="match status" value="1"/>
</dbReference>
<dbReference type="Pfam" id="PF08442">
    <property type="entry name" value="ATP-grasp_2"/>
    <property type="match status" value="1"/>
</dbReference>
<dbReference type="Pfam" id="PF00549">
    <property type="entry name" value="Ligase_CoA"/>
    <property type="match status" value="1"/>
</dbReference>
<dbReference type="PIRSF" id="PIRSF001554">
    <property type="entry name" value="SucCS_beta"/>
    <property type="match status" value="1"/>
</dbReference>
<dbReference type="SUPFAM" id="SSF56059">
    <property type="entry name" value="Glutathione synthetase ATP-binding domain-like"/>
    <property type="match status" value="1"/>
</dbReference>
<dbReference type="SUPFAM" id="SSF52210">
    <property type="entry name" value="Succinyl-CoA synthetase domains"/>
    <property type="match status" value="1"/>
</dbReference>
<dbReference type="PROSITE" id="PS50975">
    <property type="entry name" value="ATP_GRASP"/>
    <property type="match status" value="1"/>
</dbReference>
<dbReference type="PROSITE" id="PS01217">
    <property type="entry name" value="SUCCINYL_COA_LIG_3"/>
    <property type="match status" value="1"/>
</dbReference>
<organism>
    <name type="scientific">Legionella pneumophila (strain Lens)</name>
    <dbReference type="NCBI Taxonomy" id="297245"/>
    <lineage>
        <taxon>Bacteria</taxon>
        <taxon>Pseudomonadati</taxon>
        <taxon>Pseudomonadota</taxon>
        <taxon>Gammaproteobacteria</taxon>
        <taxon>Legionellales</taxon>
        <taxon>Legionellaceae</taxon>
        <taxon>Legionella</taxon>
    </lineage>
</organism>